<dbReference type="EMBL" id="CP000435">
    <property type="protein sequence ID" value="ABI45253.1"/>
    <property type="molecule type" value="Genomic_DNA"/>
</dbReference>
<dbReference type="RefSeq" id="WP_011619548.1">
    <property type="nucleotide sequence ID" value="NC_008319.1"/>
</dbReference>
<dbReference type="SMR" id="Q0I9P0"/>
<dbReference type="STRING" id="64471.sync_1627"/>
<dbReference type="KEGG" id="syg:sync_1627"/>
<dbReference type="eggNOG" id="COG0632">
    <property type="taxonomic scope" value="Bacteria"/>
</dbReference>
<dbReference type="HOGENOM" id="CLU_087936_0_0_3"/>
<dbReference type="OrthoDB" id="5293449at2"/>
<dbReference type="Proteomes" id="UP000001961">
    <property type="component" value="Chromosome"/>
</dbReference>
<dbReference type="GO" id="GO:0005737">
    <property type="term" value="C:cytoplasm"/>
    <property type="evidence" value="ECO:0007669"/>
    <property type="project" value="UniProtKB-SubCell"/>
</dbReference>
<dbReference type="GO" id="GO:0009379">
    <property type="term" value="C:Holliday junction helicase complex"/>
    <property type="evidence" value="ECO:0007669"/>
    <property type="project" value="InterPro"/>
</dbReference>
<dbReference type="GO" id="GO:0048476">
    <property type="term" value="C:Holliday junction resolvase complex"/>
    <property type="evidence" value="ECO:0007669"/>
    <property type="project" value="UniProtKB-UniRule"/>
</dbReference>
<dbReference type="GO" id="GO:0005524">
    <property type="term" value="F:ATP binding"/>
    <property type="evidence" value="ECO:0007669"/>
    <property type="project" value="InterPro"/>
</dbReference>
<dbReference type="GO" id="GO:0000400">
    <property type="term" value="F:four-way junction DNA binding"/>
    <property type="evidence" value="ECO:0007669"/>
    <property type="project" value="UniProtKB-UniRule"/>
</dbReference>
<dbReference type="GO" id="GO:0009378">
    <property type="term" value="F:four-way junction helicase activity"/>
    <property type="evidence" value="ECO:0007669"/>
    <property type="project" value="InterPro"/>
</dbReference>
<dbReference type="GO" id="GO:0006310">
    <property type="term" value="P:DNA recombination"/>
    <property type="evidence" value="ECO:0007669"/>
    <property type="project" value="UniProtKB-UniRule"/>
</dbReference>
<dbReference type="GO" id="GO:0006281">
    <property type="term" value="P:DNA repair"/>
    <property type="evidence" value="ECO:0007669"/>
    <property type="project" value="UniProtKB-UniRule"/>
</dbReference>
<dbReference type="Gene3D" id="1.10.150.20">
    <property type="entry name" value="5' to 3' exonuclease, C-terminal subdomain"/>
    <property type="match status" value="1"/>
</dbReference>
<dbReference type="Gene3D" id="2.40.50.140">
    <property type="entry name" value="Nucleic acid-binding proteins"/>
    <property type="match status" value="1"/>
</dbReference>
<dbReference type="HAMAP" id="MF_00031">
    <property type="entry name" value="DNA_HJ_migration_RuvA"/>
    <property type="match status" value="1"/>
</dbReference>
<dbReference type="InterPro" id="IPR013849">
    <property type="entry name" value="DNA_helicase_Holl-junc_RuvA_I"/>
</dbReference>
<dbReference type="InterPro" id="IPR003583">
    <property type="entry name" value="Hlx-hairpin-Hlx_DNA-bd_motif"/>
</dbReference>
<dbReference type="InterPro" id="IPR012340">
    <property type="entry name" value="NA-bd_OB-fold"/>
</dbReference>
<dbReference type="InterPro" id="IPR000085">
    <property type="entry name" value="RuvA"/>
</dbReference>
<dbReference type="InterPro" id="IPR010994">
    <property type="entry name" value="RuvA_2-like"/>
</dbReference>
<dbReference type="InterPro" id="IPR011114">
    <property type="entry name" value="RuvA_C"/>
</dbReference>
<dbReference type="NCBIfam" id="TIGR00084">
    <property type="entry name" value="ruvA"/>
    <property type="match status" value="1"/>
</dbReference>
<dbReference type="Pfam" id="PF14520">
    <property type="entry name" value="HHH_5"/>
    <property type="match status" value="1"/>
</dbReference>
<dbReference type="Pfam" id="PF07499">
    <property type="entry name" value="RuvA_C"/>
    <property type="match status" value="1"/>
</dbReference>
<dbReference type="Pfam" id="PF01330">
    <property type="entry name" value="RuvA_N"/>
    <property type="match status" value="1"/>
</dbReference>
<dbReference type="SMART" id="SM00278">
    <property type="entry name" value="HhH1"/>
    <property type="match status" value="2"/>
</dbReference>
<dbReference type="SUPFAM" id="SSF50249">
    <property type="entry name" value="Nucleic acid-binding proteins"/>
    <property type="match status" value="1"/>
</dbReference>
<dbReference type="SUPFAM" id="SSF47781">
    <property type="entry name" value="RuvA domain 2-like"/>
    <property type="match status" value="1"/>
</dbReference>
<proteinExistence type="inferred from homology"/>
<sequence length="219" mass="24098">MIGWLRGERIEHWSQGGRQGLVIACAGVGYEVQLASRYLQPLSAGATCTVWIHQVQRDDGSSLFGFPDRRERDLFRVLISVNGIGPQVGLALLESCSAAELIEAIIDGDLRRLTQAQGVGKRTAERLAVELRDRLGAWSAEKNSDHSDLSLVDRSDLKSLPIEPDPLQDLQLTLSTLGYEDLEIRRAMRAVATGEEVPAANDGDGWLRASLRWLNRPSA</sequence>
<gene>
    <name evidence="1" type="primary">ruvA</name>
    <name type="ordered locus">sync_1627</name>
</gene>
<accession>Q0I9P0</accession>
<feature type="chain" id="PRO_1000002584" description="Holliday junction branch migration complex subunit RuvA">
    <location>
        <begin position="1"/>
        <end position="219"/>
    </location>
</feature>
<feature type="region of interest" description="Domain I" evidence="1">
    <location>
        <begin position="1"/>
        <end position="67"/>
    </location>
</feature>
<feature type="region of interest" description="Domain II" evidence="1">
    <location>
        <begin position="68"/>
        <end position="146"/>
    </location>
</feature>
<feature type="region of interest" description="Flexible linker" evidence="1">
    <location>
        <begin position="147"/>
        <end position="161"/>
    </location>
</feature>
<feature type="region of interest" description="Domain III" evidence="1">
    <location>
        <begin position="162"/>
        <end position="219"/>
    </location>
</feature>
<evidence type="ECO:0000255" key="1">
    <source>
        <dbReference type="HAMAP-Rule" id="MF_00031"/>
    </source>
</evidence>
<reference key="1">
    <citation type="journal article" date="2006" name="Proc. Natl. Acad. Sci. U.S.A.">
        <title>Genome sequence of Synechococcus CC9311: insights into adaptation to a coastal environment.</title>
        <authorList>
            <person name="Palenik B."/>
            <person name="Ren Q."/>
            <person name="Dupont C.L."/>
            <person name="Myers G.S."/>
            <person name="Heidelberg J.F."/>
            <person name="Badger J.H."/>
            <person name="Madupu R."/>
            <person name="Nelson W.C."/>
            <person name="Brinkac L.M."/>
            <person name="Dodson R.J."/>
            <person name="Durkin A.S."/>
            <person name="Daugherty S.C."/>
            <person name="Sullivan S.A."/>
            <person name="Khouri H."/>
            <person name="Mohamoud Y."/>
            <person name="Halpin R."/>
            <person name="Paulsen I.T."/>
        </authorList>
    </citation>
    <scope>NUCLEOTIDE SEQUENCE [LARGE SCALE GENOMIC DNA]</scope>
    <source>
        <strain>CC9311</strain>
    </source>
</reference>
<keyword id="KW-0963">Cytoplasm</keyword>
<keyword id="KW-0227">DNA damage</keyword>
<keyword id="KW-0233">DNA recombination</keyword>
<keyword id="KW-0234">DNA repair</keyword>
<keyword id="KW-0238">DNA-binding</keyword>
<keyword id="KW-1185">Reference proteome</keyword>
<name>RUVA_SYNS3</name>
<comment type="function">
    <text evidence="1">The RuvA-RuvB-RuvC complex processes Holliday junction (HJ) DNA during genetic recombination and DNA repair, while the RuvA-RuvB complex plays an important role in the rescue of blocked DNA replication forks via replication fork reversal (RFR). RuvA specifically binds to HJ cruciform DNA, conferring on it an open structure. The RuvB hexamer acts as an ATP-dependent pump, pulling dsDNA into and through the RuvAB complex. HJ branch migration allows RuvC to scan DNA until it finds its consensus sequence, where it cleaves and resolves the cruciform DNA.</text>
</comment>
<comment type="subunit">
    <text evidence="1">Homotetramer. Forms an RuvA(8)-RuvB(12)-Holliday junction (HJ) complex. HJ DNA is sandwiched between 2 RuvA tetramers; dsDNA enters through RuvA and exits via RuvB. An RuvB hexamer assembles on each DNA strand where it exits the tetramer. Each RuvB hexamer is contacted by two RuvA subunits (via domain III) on 2 adjacent RuvB subunits; this complex drives branch migration. In the full resolvosome a probable DNA-RuvA(4)-RuvB(12)-RuvC(2) complex forms which resolves the HJ.</text>
</comment>
<comment type="subcellular location">
    <subcellularLocation>
        <location evidence="1">Cytoplasm</location>
    </subcellularLocation>
</comment>
<comment type="domain">
    <text evidence="1">Has three domains with a flexible linker between the domains II and III and assumes an 'L' shape. Domain III is highly mobile and contacts RuvB.</text>
</comment>
<comment type="similarity">
    <text evidence="1">Belongs to the RuvA family.</text>
</comment>
<protein>
    <recommendedName>
        <fullName evidence="1">Holliday junction branch migration complex subunit RuvA</fullName>
    </recommendedName>
</protein>
<organism>
    <name type="scientific">Synechococcus sp. (strain CC9311)</name>
    <dbReference type="NCBI Taxonomy" id="64471"/>
    <lineage>
        <taxon>Bacteria</taxon>
        <taxon>Bacillati</taxon>
        <taxon>Cyanobacteriota</taxon>
        <taxon>Cyanophyceae</taxon>
        <taxon>Synechococcales</taxon>
        <taxon>Synechococcaceae</taxon>
        <taxon>Synechococcus</taxon>
    </lineage>
</organism>